<reference key="1">
    <citation type="journal article" date="1997" name="Virology">
        <title>Analysis of 74 kb of DNA located at the right end of the 330-kb chlorella virus PBCV-1 genome.</title>
        <authorList>
            <person name="Li Y."/>
            <person name="Lu Z."/>
            <person name="Sun L."/>
            <person name="Ropp S."/>
            <person name="Kutish G.F."/>
            <person name="Rock D.L."/>
            <person name="van Etten J.L."/>
        </authorList>
    </citation>
    <scope>NUCLEOTIDE SEQUENCE [LARGE SCALE GENOMIC DNA]</scope>
</reference>
<reference key="2">
    <citation type="submission" date="2011-02" db="EMBL/GenBank/DDBJ databases">
        <authorList>
            <person name="Dunigan D.D."/>
            <person name="Blanc G."/>
            <person name="Duncan G.A."/>
            <person name="Gurnon J.R."/>
            <person name="Jeanniard A."/>
            <person name="McClung O.W."/>
            <person name="Upton C."/>
            <person name="van Etten J.L."/>
        </authorList>
    </citation>
    <scope>SEQUENCE REVISION TO N-TERMINUS</scope>
</reference>
<reference key="3">
    <citation type="journal article" date="2010" name="J. Virol.">
        <title>Microarray analysis of Paramecium bursaria chlorella virus 1 transcription.</title>
        <authorList>
            <person name="Yanai-Balser G.M."/>
            <person name="Duncan G.A."/>
            <person name="Eudy J.D."/>
            <person name="Wang D."/>
            <person name="Li X."/>
            <person name="Agarkova I.V."/>
            <person name="Dunigan D.D."/>
            <person name="Van Etten J.L."/>
        </authorList>
    </citation>
    <scope>INDUCTION</scope>
</reference>
<accession>O41107</accession>
<comment type="induction">
    <text evidence="2">Expressed in the late phase of the viral replicative cycle.</text>
</comment>
<comment type="similarity">
    <text evidence="3">In the N-terminal section; belongs to the transposase 2 family.</text>
</comment>
<comment type="similarity">
    <text evidence="3">In the C-terminal section; belongs to the transposase 35 family.</text>
</comment>
<sequence>MSKLTPWWSRKSQQLTKIIPWGTENVNTFQNDVIAKRVLRTRKVKLNPTKQQKMMLMKFADAARYSYNAAVSAVNDKTHNPNKIELQNAFLSLKRRDGTYNKFFQKRRWLLGCPQPIRQQAIFEAANNFKSAFTNLKNKNIDHFKMTYKTKKHQRKCGFSLGIGTHLKHNDGVLIILPRNLGQVRYFGSVPFEGKPDAECRIQRDPYGDHWLLVPVYKTTKTQTTKPIVAIDPGVRTPFACFGSNGGSKTLGEDMNAKLTDIRTRVSLVDRRISKCQDVSLKRKMREHRRRLFRKHQRVRDAYHWEIIKDITNEYSGVLLPPFETQRVSRMLKNKTNCSMLGISHFTFRMRMKGKCEEKGLLYTEPTEEYTSKTCGVCGQINYLLGSKKTFECFCGNVCDRDIHAARNILLKWLSTEAGARVVETFLASRSS</sequence>
<organismHost>
    <name type="scientific">Chlorella</name>
    <dbReference type="NCBI Taxonomy" id="3071"/>
</organismHost>
<gene>
    <name type="ordered locus">A625R</name>
</gene>
<keyword id="KW-0233">DNA recombination</keyword>
<keyword id="KW-0238">DNA-binding</keyword>
<keyword id="KW-0479">Metal-binding</keyword>
<keyword id="KW-1185">Reference proteome</keyword>
<keyword id="KW-0815">Transposition</keyword>
<keyword id="KW-0862">Zinc</keyword>
<proteinExistence type="evidence at transcript level"/>
<evidence type="ECO:0000255" key="1"/>
<evidence type="ECO:0000269" key="2">
    <source>
    </source>
</evidence>
<evidence type="ECO:0000305" key="3"/>
<feature type="chain" id="PRO_0000075537" description="Putative transposase A625R">
    <location>
        <begin position="1"/>
        <end position="432"/>
    </location>
</feature>
<feature type="binding site" evidence="1">
    <location>
        <position position="375"/>
    </location>
    <ligand>
        <name>Zn(2+)</name>
        <dbReference type="ChEBI" id="CHEBI:29105"/>
    </ligand>
</feature>
<feature type="binding site" evidence="1">
    <location>
        <position position="378"/>
    </location>
    <ligand>
        <name>Zn(2+)</name>
        <dbReference type="ChEBI" id="CHEBI:29105"/>
    </ligand>
</feature>
<feature type="binding site" evidence="1">
    <location>
        <position position="393"/>
    </location>
    <ligand>
        <name>Zn(2+)</name>
        <dbReference type="ChEBI" id="CHEBI:29105"/>
    </ligand>
</feature>
<feature type="binding site" evidence="1">
    <location>
        <position position="395"/>
    </location>
    <ligand>
        <name>Zn(2+)</name>
        <dbReference type="ChEBI" id="CHEBI:29105"/>
    </ligand>
</feature>
<protein>
    <recommendedName>
        <fullName>Putative transposase A625R</fullName>
    </recommendedName>
</protein>
<organism>
    <name type="scientific">Paramecium bursaria Chlorella virus 1</name>
    <name type="common">PBCV-1</name>
    <dbReference type="NCBI Taxonomy" id="10506"/>
    <lineage>
        <taxon>Viruses</taxon>
        <taxon>Varidnaviria</taxon>
        <taxon>Bamfordvirae</taxon>
        <taxon>Nucleocytoviricota</taxon>
        <taxon>Megaviricetes</taxon>
        <taxon>Algavirales</taxon>
        <taxon>Phycodnaviridae</taxon>
        <taxon>Chlorovirus</taxon>
    </lineage>
</organism>
<dbReference type="EMBL" id="JF411744">
    <property type="protein sequence ID" value="AAC96956.2"/>
    <property type="molecule type" value="Genomic_DNA"/>
</dbReference>
<dbReference type="PIR" id="T18127">
    <property type="entry name" value="T18127"/>
</dbReference>
<dbReference type="RefSeq" id="NP_048981.2">
    <property type="nucleotide sequence ID" value="NC_000852.5"/>
</dbReference>
<dbReference type="SMR" id="O41107"/>
<dbReference type="GeneID" id="917867"/>
<dbReference type="KEGG" id="vg:917867"/>
<dbReference type="OrthoDB" id="3397at10239"/>
<dbReference type="Proteomes" id="UP000000862">
    <property type="component" value="Genome"/>
</dbReference>
<dbReference type="GO" id="GO:0003677">
    <property type="term" value="F:DNA binding"/>
    <property type="evidence" value="ECO:0007669"/>
    <property type="project" value="UniProtKB-KW"/>
</dbReference>
<dbReference type="GO" id="GO:0046872">
    <property type="term" value="F:metal ion binding"/>
    <property type="evidence" value="ECO:0007669"/>
    <property type="project" value="UniProtKB-KW"/>
</dbReference>
<dbReference type="GO" id="GO:0006310">
    <property type="term" value="P:DNA recombination"/>
    <property type="evidence" value="ECO:0007669"/>
    <property type="project" value="UniProtKB-KW"/>
</dbReference>
<dbReference type="GO" id="GO:0032196">
    <property type="term" value="P:transposition"/>
    <property type="evidence" value="ECO:0007669"/>
    <property type="project" value="UniProtKB-KW"/>
</dbReference>
<dbReference type="InterPro" id="IPR010095">
    <property type="entry name" value="Cas12f1-like_TNB"/>
</dbReference>
<dbReference type="InterPro" id="IPR051491">
    <property type="entry name" value="Recombinase/Transposase-rel"/>
</dbReference>
<dbReference type="InterPro" id="IPR021027">
    <property type="entry name" value="Transposase_put_HTH"/>
</dbReference>
<dbReference type="NCBIfam" id="NF040570">
    <property type="entry name" value="guided_TnpB"/>
    <property type="match status" value="1"/>
</dbReference>
<dbReference type="PANTHER" id="PTHR36172">
    <property type="match status" value="1"/>
</dbReference>
<dbReference type="PANTHER" id="PTHR36172:SF1">
    <property type="entry name" value="RESOLVASE-RELATED"/>
    <property type="match status" value="1"/>
</dbReference>
<dbReference type="Pfam" id="PF07282">
    <property type="entry name" value="Cas12f1-like_TNB"/>
    <property type="match status" value="1"/>
</dbReference>
<dbReference type="Pfam" id="PF12323">
    <property type="entry name" value="HTH_OrfB_IS605"/>
    <property type="match status" value="1"/>
</dbReference>
<name>A625_PBCV1</name>